<reference key="1">
    <citation type="journal article" date="1989" name="J. Gen. Virol.">
        <title>Nucleotide sequence of papaya mosaic virus RNA.</title>
        <authorList>
            <person name="Sit T.L."/>
            <person name="Abouhaidar M.G."/>
            <person name="Holy S."/>
        </authorList>
    </citation>
    <scope>NUCLEOTIDE SEQUENCE [GENOMIC RNA]</scope>
</reference>
<reference key="2">
    <citation type="journal article" date="2005" name="Mol. Plant Microbe Interact.">
        <title>A new cell-to-cell transport model for Potexviruses.</title>
        <authorList>
            <person name="Verchot-Lubicz J."/>
        </authorList>
    </citation>
    <scope>REVIEW</scope>
</reference>
<proteinExistence type="inferred from homology"/>
<accession>P20954</accession>
<gene>
    <name type="ORF">ORF4</name>
</gene>
<protein>
    <recommendedName>
        <fullName>Movement protein TGBp3</fullName>
    </recommendedName>
    <alternativeName>
        <fullName>7 kDa protein</fullName>
    </alternativeName>
    <alternativeName>
        <fullName>Triple gene block 3 protein</fullName>
        <shortName>TGBp3</shortName>
    </alternativeName>
</protein>
<dbReference type="EMBL" id="D13957">
    <property type="protein sequence ID" value="BAA03053.1"/>
    <property type="molecule type" value="Genomic_RNA"/>
</dbReference>
<dbReference type="PIR" id="JQ0099">
    <property type="entry name" value="JQ0099"/>
</dbReference>
<dbReference type="RefSeq" id="NP_044333.1">
    <property type="nucleotide sequence ID" value="NC_001748.1"/>
</dbReference>
<dbReference type="SMR" id="P20954"/>
<dbReference type="KEGG" id="vg:1494022"/>
<dbReference type="Proteomes" id="UP000000477">
    <property type="component" value="Genome"/>
</dbReference>
<dbReference type="GO" id="GO:0044167">
    <property type="term" value="C:host cell endoplasmic reticulum membrane"/>
    <property type="evidence" value="ECO:0007669"/>
    <property type="project" value="UniProtKB-SubCell"/>
</dbReference>
<dbReference type="GO" id="GO:0016020">
    <property type="term" value="C:membrane"/>
    <property type="evidence" value="ECO:0007669"/>
    <property type="project" value="UniProtKB-KW"/>
</dbReference>
<dbReference type="GO" id="GO:0046740">
    <property type="term" value="P:transport of virus in host, cell to cell"/>
    <property type="evidence" value="ECO:0007669"/>
    <property type="project" value="UniProtKB-KW"/>
</dbReference>
<dbReference type="InterPro" id="IPR003411">
    <property type="entry name" value="TGBp3"/>
</dbReference>
<dbReference type="Pfam" id="PF02495">
    <property type="entry name" value="TGBp3"/>
    <property type="match status" value="1"/>
</dbReference>
<comment type="function">
    <text evidence="1">Plays a role in viral cell-to-cell propagation, by facilitating genome transport to neighboring plant cells through plasmosdesmata. May induce the formation of granular vesicles derived from the Endoplasmic reticulum, which align on actin filaments (By similarity).</text>
</comment>
<comment type="subcellular location">
    <subcellularLocation>
        <location evidence="1">Host endoplasmic reticulum membrane</location>
    </subcellularLocation>
</comment>
<comment type="miscellaneous">
    <text>TGBp1, TGBp2 and TGBp3 seem to act together for cell-to-cell propagation. TGBp1 is the main movement protein that physically cross the plasmodesma with the viral genome. TGBp2 and TGBp3 would facilitate TGBp1 function.</text>
</comment>
<comment type="similarity">
    <text evidence="3">Belongs to the Tymovirales TGBp3 protein family.</text>
</comment>
<organism>
    <name type="scientific">Papaya mosaic potexvirus</name>
    <name type="common">PMV</name>
    <dbReference type="NCBI Taxonomy" id="12181"/>
    <lineage>
        <taxon>Viruses</taxon>
        <taxon>Riboviria</taxon>
        <taxon>Orthornavirae</taxon>
        <taxon>Kitrinoviricota</taxon>
        <taxon>Alsuviricetes</taxon>
        <taxon>Tymovirales</taxon>
        <taxon>Alphaflexiviridae</taxon>
        <taxon>Potexvirus</taxon>
    </lineage>
</organism>
<feature type="chain" id="PRO_0000222604" description="Movement protein TGBp3">
    <location>
        <begin position="1"/>
        <end position="68"/>
    </location>
</feature>
<feature type="topological domain" description="Lumenal" evidence="2">
    <location>
        <begin position="1"/>
        <end position="6"/>
    </location>
</feature>
<feature type="transmembrane region" description="Helical" evidence="2">
    <location>
        <begin position="7"/>
        <end position="26"/>
    </location>
</feature>
<feature type="topological domain" description="Cytoplasmic" evidence="2">
    <location>
        <begin position="27"/>
        <end position="68"/>
    </location>
</feature>
<organismHost>
    <name type="scientific">Carica papaya</name>
    <name type="common">Papaya</name>
    <dbReference type="NCBI Taxonomy" id="3649"/>
</organismHost>
<organismHost>
    <name type="scientific">Ullucus tuberosus</name>
    <name type="common">Olluco</name>
    <dbReference type="NCBI Taxonomy" id="108055"/>
</organismHost>
<name>TGB3_PMV</name>
<sequence length="68" mass="7224">MFSGKEITLFALSTLIALIVLNYMSATPNPVCLIELTGHSAVLRGNNCESLTSGVIEALSAHLHGLRN</sequence>
<evidence type="ECO:0000250" key="1"/>
<evidence type="ECO:0000255" key="2"/>
<evidence type="ECO:0000305" key="3"/>
<keyword id="KW-1038">Host endoplasmic reticulum</keyword>
<keyword id="KW-1043">Host membrane</keyword>
<keyword id="KW-0472">Membrane</keyword>
<keyword id="KW-1185">Reference proteome</keyword>
<keyword id="KW-0812">Transmembrane</keyword>
<keyword id="KW-1133">Transmembrane helix</keyword>
<keyword id="KW-0813">Transport</keyword>
<keyword id="KW-0916">Viral movement protein</keyword>